<name>RLMH_CAUVC</name>
<evidence type="ECO:0000255" key="1">
    <source>
        <dbReference type="HAMAP-Rule" id="MF_00658"/>
    </source>
</evidence>
<protein>
    <recommendedName>
        <fullName evidence="1">Ribosomal RNA large subunit methyltransferase H</fullName>
        <ecNumber evidence="1">2.1.1.177</ecNumber>
    </recommendedName>
    <alternativeName>
        <fullName evidence="1">23S rRNA (pseudouridine1915-N3)-methyltransferase</fullName>
    </alternativeName>
    <alternativeName>
        <fullName evidence="1">23S rRNA m3Psi1915 methyltransferase</fullName>
    </alternativeName>
    <alternativeName>
        <fullName evidence="1">rRNA (pseudouridine-N3-)-methyltransferase RlmH</fullName>
    </alternativeName>
</protein>
<reference key="1">
    <citation type="journal article" date="2001" name="Proc. Natl. Acad. Sci. U.S.A.">
        <title>Complete genome sequence of Caulobacter crescentus.</title>
        <authorList>
            <person name="Nierman W.C."/>
            <person name="Feldblyum T.V."/>
            <person name="Laub M.T."/>
            <person name="Paulsen I.T."/>
            <person name="Nelson K.E."/>
            <person name="Eisen J.A."/>
            <person name="Heidelberg J.F."/>
            <person name="Alley M.R.K."/>
            <person name="Ohta N."/>
            <person name="Maddock J.R."/>
            <person name="Potocka I."/>
            <person name="Nelson W.C."/>
            <person name="Newton A."/>
            <person name="Stephens C."/>
            <person name="Phadke N.D."/>
            <person name="Ely B."/>
            <person name="DeBoy R.T."/>
            <person name="Dodson R.J."/>
            <person name="Durkin A.S."/>
            <person name="Gwinn M.L."/>
            <person name="Haft D.H."/>
            <person name="Kolonay J.F."/>
            <person name="Smit J."/>
            <person name="Craven M.B."/>
            <person name="Khouri H.M."/>
            <person name="Shetty J."/>
            <person name="Berry K.J."/>
            <person name="Utterback T.R."/>
            <person name="Tran K."/>
            <person name="Wolf A.M."/>
            <person name="Vamathevan J.J."/>
            <person name="Ermolaeva M.D."/>
            <person name="White O."/>
            <person name="Salzberg S.L."/>
            <person name="Venter J.C."/>
            <person name="Shapiro L."/>
            <person name="Fraser C.M."/>
        </authorList>
    </citation>
    <scope>NUCLEOTIDE SEQUENCE [LARGE SCALE GENOMIC DNA]</scope>
    <source>
        <strain>ATCC 19089 / CIP 103742 / CB 15</strain>
    </source>
</reference>
<sequence>MMKITILTVGKLGRMVEAQLALDYASRATASGRALALGPVDILEVEARKPGKAAEAEVLRPHLEGAYVVACDEHGKAWKSRAFADHLARLRDDGNRRVVFLIGGADGLDPSILAAANETMAFGVQTWPHALARAMLAEQIYRAATILSGSPYHRD</sequence>
<accession>Q9A2X3</accession>
<comment type="function">
    <text evidence="1">Specifically methylates the pseudouridine at position 1915 (m3Psi1915) in 23S rRNA.</text>
</comment>
<comment type="catalytic activity">
    <reaction evidence="1">
        <text>pseudouridine(1915) in 23S rRNA + S-adenosyl-L-methionine = N(3)-methylpseudouridine(1915) in 23S rRNA + S-adenosyl-L-homocysteine + H(+)</text>
        <dbReference type="Rhea" id="RHEA:42752"/>
        <dbReference type="Rhea" id="RHEA-COMP:10221"/>
        <dbReference type="Rhea" id="RHEA-COMP:10222"/>
        <dbReference type="ChEBI" id="CHEBI:15378"/>
        <dbReference type="ChEBI" id="CHEBI:57856"/>
        <dbReference type="ChEBI" id="CHEBI:59789"/>
        <dbReference type="ChEBI" id="CHEBI:65314"/>
        <dbReference type="ChEBI" id="CHEBI:74486"/>
        <dbReference type="EC" id="2.1.1.177"/>
    </reaction>
</comment>
<comment type="subunit">
    <text evidence="1">Homodimer.</text>
</comment>
<comment type="subcellular location">
    <subcellularLocation>
        <location evidence="1">Cytoplasm</location>
    </subcellularLocation>
</comment>
<comment type="similarity">
    <text evidence="1">Belongs to the RNA methyltransferase RlmH family.</text>
</comment>
<keyword id="KW-0963">Cytoplasm</keyword>
<keyword id="KW-0489">Methyltransferase</keyword>
<keyword id="KW-1185">Reference proteome</keyword>
<keyword id="KW-0698">rRNA processing</keyword>
<keyword id="KW-0949">S-adenosyl-L-methionine</keyword>
<keyword id="KW-0808">Transferase</keyword>
<dbReference type="EC" id="2.1.1.177" evidence="1"/>
<dbReference type="EMBL" id="AE005673">
    <property type="protein sequence ID" value="AAK25395.1"/>
    <property type="molecule type" value="Genomic_DNA"/>
</dbReference>
<dbReference type="PIR" id="G87674">
    <property type="entry name" value="G87674"/>
</dbReference>
<dbReference type="RefSeq" id="NP_422227.1">
    <property type="nucleotide sequence ID" value="NC_002696.2"/>
</dbReference>
<dbReference type="SMR" id="Q9A2X3"/>
<dbReference type="STRING" id="190650.CC_3433"/>
<dbReference type="EnsemblBacteria" id="AAK25395">
    <property type="protein sequence ID" value="AAK25395"/>
    <property type="gene ID" value="CC_3433"/>
</dbReference>
<dbReference type="KEGG" id="ccr:CC_3433"/>
<dbReference type="PATRIC" id="fig|190650.5.peg.3445"/>
<dbReference type="eggNOG" id="COG1576">
    <property type="taxonomic scope" value="Bacteria"/>
</dbReference>
<dbReference type="HOGENOM" id="CLU_100552_1_1_5"/>
<dbReference type="BioCyc" id="CAULO:CC3433-MONOMER"/>
<dbReference type="Proteomes" id="UP000001816">
    <property type="component" value="Chromosome"/>
</dbReference>
<dbReference type="GO" id="GO:0005737">
    <property type="term" value="C:cytoplasm"/>
    <property type="evidence" value="ECO:0007669"/>
    <property type="project" value="UniProtKB-SubCell"/>
</dbReference>
<dbReference type="GO" id="GO:0070038">
    <property type="term" value="F:rRNA (pseudouridine-N3-)-methyltransferase activity"/>
    <property type="evidence" value="ECO:0007669"/>
    <property type="project" value="UniProtKB-UniRule"/>
</dbReference>
<dbReference type="CDD" id="cd18081">
    <property type="entry name" value="RlmH-like"/>
    <property type="match status" value="1"/>
</dbReference>
<dbReference type="Gene3D" id="3.40.1280.10">
    <property type="match status" value="1"/>
</dbReference>
<dbReference type="HAMAP" id="MF_00658">
    <property type="entry name" value="23SrRNA_methyltr_H"/>
    <property type="match status" value="1"/>
</dbReference>
<dbReference type="InterPro" id="IPR029028">
    <property type="entry name" value="Alpha/beta_knot_MTases"/>
</dbReference>
<dbReference type="InterPro" id="IPR003742">
    <property type="entry name" value="RlmH-like"/>
</dbReference>
<dbReference type="InterPro" id="IPR029026">
    <property type="entry name" value="tRNA_m1G_MTases_N"/>
</dbReference>
<dbReference type="NCBIfam" id="NF000988">
    <property type="entry name" value="PRK00103.2-2"/>
    <property type="match status" value="1"/>
</dbReference>
<dbReference type="PANTHER" id="PTHR33603">
    <property type="entry name" value="METHYLTRANSFERASE"/>
    <property type="match status" value="1"/>
</dbReference>
<dbReference type="PANTHER" id="PTHR33603:SF1">
    <property type="entry name" value="RIBOSOMAL RNA LARGE SUBUNIT METHYLTRANSFERASE H"/>
    <property type="match status" value="1"/>
</dbReference>
<dbReference type="Pfam" id="PF02590">
    <property type="entry name" value="SPOUT_MTase"/>
    <property type="match status" value="1"/>
</dbReference>
<dbReference type="PIRSF" id="PIRSF004505">
    <property type="entry name" value="MT_bac"/>
    <property type="match status" value="1"/>
</dbReference>
<dbReference type="SUPFAM" id="SSF75217">
    <property type="entry name" value="alpha/beta knot"/>
    <property type="match status" value="1"/>
</dbReference>
<organism>
    <name type="scientific">Caulobacter vibrioides (strain ATCC 19089 / CIP 103742 / CB 15)</name>
    <name type="common">Caulobacter crescentus</name>
    <dbReference type="NCBI Taxonomy" id="190650"/>
    <lineage>
        <taxon>Bacteria</taxon>
        <taxon>Pseudomonadati</taxon>
        <taxon>Pseudomonadota</taxon>
        <taxon>Alphaproteobacteria</taxon>
        <taxon>Caulobacterales</taxon>
        <taxon>Caulobacteraceae</taxon>
        <taxon>Caulobacter</taxon>
    </lineage>
</organism>
<proteinExistence type="inferred from homology"/>
<gene>
    <name evidence="1" type="primary">rlmH</name>
    <name type="ordered locus">CC_3433</name>
</gene>
<feature type="chain" id="PRO_0000198106" description="Ribosomal RNA large subunit methyltransferase H">
    <location>
        <begin position="1"/>
        <end position="155"/>
    </location>
</feature>
<feature type="binding site" evidence="1">
    <location>
        <position position="103"/>
    </location>
    <ligand>
        <name>S-adenosyl-L-methionine</name>
        <dbReference type="ChEBI" id="CHEBI:59789"/>
    </ligand>
</feature>